<sequence>MSAITRHGDALVIRLYIQPKASRDQIVGLHGDELKVAITAPPVDGQANAHLTKFLAKQFRVAKSLVVIEKGELGRHKQIRITHPQHIPADVAEFIE</sequence>
<protein>
    <recommendedName>
        <fullName evidence="1">UPF0235 protein ECA3630</fullName>
    </recommendedName>
</protein>
<name>Y3630_PECAS</name>
<keyword id="KW-1185">Reference proteome</keyword>
<proteinExistence type="inferred from homology"/>
<organism>
    <name type="scientific">Pectobacterium atrosepticum (strain SCRI 1043 / ATCC BAA-672)</name>
    <name type="common">Erwinia carotovora subsp. atroseptica</name>
    <dbReference type="NCBI Taxonomy" id="218491"/>
    <lineage>
        <taxon>Bacteria</taxon>
        <taxon>Pseudomonadati</taxon>
        <taxon>Pseudomonadota</taxon>
        <taxon>Gammaproteobacteria</taxon>
        <taxon>Enterobacterales</taxon>
        <taxon>Pectobacteriaceae</taxon>
        <taxon>Pectobacterium</taxon>
    </lineage>
</organism>
<reference key="1">
    <citation type="journal article" date="2004" name="Proc. Natl. Acad. Sci. U.S.A.">
        <title>Genome sequence of the enterobacterial phytopathogen Erwinia carotovora subsp. atroseptica and characterization of virulence factors.</title>
        <authorList>
            <person name="Bell K.S."/>
            <person name="Sebaihia M."/>
            <person name="Pritchard L."/>
            <person name="Holden M.T.G."/>
            <person name="Hyman L.J."/>
            <person name="Holeva M.C."/>
            <person name="Thomson N.R."/>
            <person name="Bentley S.D."/>
            <person name="Churcher L.J.C."/>
            <person name="Mungall K."/>
            <person name="Atkin R."/>
            <person name="Bason N."/>
            <person name="Brooks K."/>
            <person name="Chillingworth T."/>
            <person name="Clark K."/>
            <person name="Doggett J."/>
            <person name="Fraser A."/>
            <person name="Hance Z."/>
            <person name="Hauser H."/>
            <person name="Jagels K."/>
            <person name="Moule S."/>
            <person name="Norbertczak H."/>
            <person name="Ormond D."/>
            <person name="Price C."/>
            <person name="Quail M.A."/>
            <person name="Sanders M."/>
            <person name="Walker D."/>
            <person name="Whitehead S."/>
            <person name="Salmond G.P.C."/>
            <person name="Birch P.R.J."/>
            <person name="Parkhill J."/>
            <person name="Toth I.K."/>
        </authorList>
    </citation>
    <scope>NUCLEOTIDE SEQUENCE [LARGE SCALE GENOMIC DNA]</scope>
    <source>
        <strain>SCRI 1043 / ATCC BAA-672</strain>
    </source>
</reference>
<dbReference type="EMBL" id="BX950851">
    <property type="protein sequence ID" value="CAG76528.1"/>
    <property type="molecule type" value="Genomic_DNA"/>
</dbReference>
<dbReference type="SMR" id="Q6D118"/>
<dbReference type="STRING" id="218491.ECA3630"/>
<dbReference type="KEGG" id="eca:ECA3630"/>
<dbReference type="eggNOG" id="COG1872">
    <property type="taxonomic scope" value="Bacteria"/>
</dbReference>
<dbReference type="HOGENOM" id="CLU_130694_5_0_6"/>
<dbReference type="OrthoDB" id="9800587at2"/>
<dbReference type="Proteomes" id="UP000007966">
    <property type="component" value="Chromosome"/>
</dbReference>
<dbReference type="GO" id="GO:0005737">
    <property type="term" value="C:cytoplasm"/>
    <property type="evidence" value="ECO:0007669"/>
    <property type="project" value="TreeGrafter"/>
</dbReference>
<dbReference type="Gene3D" id="3.30.1200.10">
    <property type="entry name" value="YggU-like"/>
    <property type="match status" value="1"/>
</dbReference>
<dbReference type="HAMAP" id="MF_00634">
    <property type="entry name" value="UPF0235"/>
    <property type="match status" value="1"/>
</dbReference>
<dbReference type="InterPro" id="IPR003746">
    <property type="entry name" value="DUF167"/>
</dbReference>
<dbReference type="InterPro" id="IPR036591">
    <property type="entry name" value="YggU-like_sf"/>
</dbReference>
<dbReference type="NCBIfam" id="TIGR00251">
    <property type="entry name" value="DUF167 family protein"/>
    <property type="match status" value="1"/>
</dbReference>
<dbReference type="NCBIfam" id="NF003466">
    <property type="entry name" value="PRK05090.1"/>
    <property type="match status" value="1"/>
</dbReference>
<dbReference type="PANTHER" id="PTHR13420">
    <property type="entry name" value="UPF0235 PROTEIN C15ORF40"/>
    <property type="match status" value="1"/>
</dbReference>
<dbReference type="PANTHER" id="PTHR13420:SF7">
    <property type="entry name" value="UPF0235 PROTEIN C15ORF40"/>
    <property type="match status" value="1"/>
</dbReference>
<dbReference type="Pfam" id="PF02594">
    <property type="entry name" value="DUF167"/>
    <property type="match status" value="1"/>
</dbReference>
<dbReference type="SMART" id="SM01152">
    <property type="entry name" value="DUF167"/>
    <property type="match status" value="1"/>
</dbReference>
<dbReference type="SUPFAM" id="SSF69786">
    <property type="entry name" value="YggU-like"/>
    <property type="match status" value="1"/>
</dbReference>
<accession>Q6D118</accession>
<feature type="chain" id="PRO_1000056768" description="UPF0235 protein ECA3630">
    <location>
        <begin position="1"/>
        <end position="96"/>
    </location>
</feature>
<evidence type="ECO:0000255" key="1">
    <source>
        <dbReference type="HAMAP-Rule" id="MF_00634"/>
    </source>
</evidence>
<gene>
    <name type="ordered locus">ECA3630</name>
</gene>
<comment type="similarity">
    <text evidence="1">Belongs to the UPF0235 family.</text>
</comment>